<proteinExistence type="evidence at transcript level"/>
<keyword id="KW-1015">Disulfide bond</keyword>
<keyword id="KW-0732">Signal</keyword>
<keyword id="KW-0800">Toxin</keyword>
<protein>
    <recommendedName>
        <fullName evidence="5">N.vectensis toxin 6</fullName>
        <shortName evidence="4">Nv6</shortName>
    </recommendedName>
</protein>
<accession>P0DQR2</accession>
<name>NV6_NEMVE</name>
<organism>
    <name type="scientific">Nematostella vectensis</name>
    <name type="common">Starlet sea anemone</name>
    <dbReference type="NCBI Taxonomy" id="45351"/>
    <lineage>
        <taxon>Eukaryota</taxon>
        <taxon>Metazoa</taxon>
        <taxon>Cnidaria</taxon>
        <taxon>Anthozoa</taxon>
        <taxon>Hexacorallia</taxon>
        <taxon>Actiniaria</taxon>
        <taxon>Edwardsiidae</taxon>
        <taxon>Nematostella</taxon>
    </lineage>
</organism>
<comment type="function">
    <text evidence="5">Probable toxin.</text>
</comment>
<comment type="developmental stage">
    <text evidence="3">No protein detected at any developmental stage, probably due to low expression levels (PubMed:31134275). At transcriptional level, is found in the larval stage (PubMed:31134275).</text>
</comment>
<comment type="online information" name="National Center for Biotechnology Information (NCBI)">
    <link uri="https://www.ncbi.nlm.nih.gov/nucleotide/XR_004295222.1?report=genbank&amp;log$=nucltop&amp;blast_rank=1&amp;RID=CTDBJRB3013"/>
</comment>
<feature type="signal peptide" evidence="2">
    <location>
        <begin position="1"/>
        <end position="20"/>
    </location>
</feature>
<feature type="chain" id="PRO_0000453817" description="N.vectensis toxin 6" evidence="5">
    <location>
        <begin position="21"/>
        <end position="85"/>
    </location>
</feature>
<feature type="disulfide bond" evidence="1">
    <location>
        <begin position="46"/>
        <end position="82"/>
    </location>
</feature>
<feature type="disulfide bond" evidence="1">
    <location>
        <begin position="48"/>
        <end position="71"/>
    </location>
</feature>
<feature type="disulfide bond" evidence="1">
    <location>
        <begin position="64"/>
        <end position="83"/>
    </location>
</feature>
<reference key="1">
    <citation type="journal article" date="2019" name="Mol. Biol. Evol.">
        <title>The birth and death of toxins with distinct functions: a case study in the sea anemone Nematostella.</title>
        <authorList>
            <person name="Sachkova M.Y."/>
            <person name="Singer S.A."/>
            <person name="Macrander J."/>
            <person name="Reitzel A.M."/>
            <person name="Peigneur S."/>
            <person name="Tytgat J."/>
            <person name="Moran Y."/>
        </authorList>
    </citation>
    <scope>NUCLEOTIDE SEQUENCE [MRNA]</scope>
</reference>
<evidence type="ECO:0000250" key="1">
    <source>
        <dbReference type="UniProtKB" id="P19651"/>
    </source>
</evidence>
<evidence type="ECO:0000255" key="2"/>
<evidence type="ECO:0000269" key="3">
    <source>
    </source>
</evidence>
<evidence type="ECO:0000303" key="4">
    <source>
    </source>
</evidence>
<evidence type="ECO:0000305" key="5"/>
<dbReference type="SMR" id="P0DQR2"/>
<dbReference type="GO" id="GO:0090729">
    <property type="term" value="F:toxin activity"/>
    <property type="evidence" value="ECO:0007669"/>
    <property type="project" value="UniProtKB-KW"/>
</dbReference>
<dbReference type="Gene3D" id="2.20.20.10">
    <property type="entry name" value="Anthopleurin-A"/>
    <property type="match status" value="1"/>
</dbReference>
<dbReference type="InterPro" id="IPR023355">
    <property type="entry name" value="Myo_ane_neurotoxin_sf"/>
</dbReference>
<dbReference type="Pfam" id="PF00706">
    <property type="entry name" value="Toxin_4"/>
    <property type="match status" value="1"/>
</dbReference>
<dbReference type="SUPFAM" id="SSF57392">
    <property type="entry name" value="Defensin-like"/>
    <property type="match status" value="1"/>
</dbReference>
<sequence>MISFKTVIVCLFLWVVIIGARHRPVKLDDEIFRDYHIDIDPSKSSCRCDDDGAEGSGTVWYGNCPSGWAMCTSSHYSAFAECCKQ</sequence>